<evidence type="ECO:0000255" key="1">
    <source>
        <dbReference type="HAMAP-Rule" id="MF_03152"/>
    </source>
</evidence>
<evidence type="ECO:0000305" key="2"/>
<organism>
    <name type="scientific">Thalassiosira pseudonana</name>
    <name type="common">Marine diatom</name>
    <name type="synonym">Cyclotella nana</name>
    <dbReference type="NCBI Taxonomy" id="35128"/>
    <lineage>
        <taxon>Eukaryota</taxon>
        <taxon>Sar</taxon>
        <taxon>Stramenopiles</taxon>
        <taxon>Ochrophyta</taxon>
        <taxon>Bacillariophyta</taxon>
        <taxon>Coscinodiscophyceae</taxon>
        <taxon>Thalassiosirophycidae</taxon>
        <taxon>Thalassiosirales</taxon>
        <taxon>Thalassiosiraceae</taxon>
        <taxon>Thalassiosira</taxon>
    </lineage>
</organism>
<dbReference type="EC" id="2.1.1.228" evidence="1"/>
<dbReference type="EMBL" id="CM000638">
    <property type="protein sequence ID" value="EED96442.1"/>
    <property type="molecule type" value="Genomic_DNA"/>
</dbReference>
<dbReference type="RefSeq" id="XP_002286801.1">
    <property type="nucleotide sequence ID" value="XM_002286765.1"/>
</dbReference>
<dbReference type="SMR" id="B8BQY5"/>
<dbReference type="STRING" id="35128.B8BQY5"/>
<dbReference type="PaxDb" id="35128-Thaps268027"/>
<dbReference type="EnsemblProtists" id="EED96442">
    <property type="protein sequence ID" value="EED96442"/>
    <property type="gene ID" value="THAPSDRAFT_268027"/>
</dbReference>
<dbReference type="GeneID" id="7445125"/>
<dbReference type="KEGG" id="tps:THAPSDRAFT_268027"/>
<dbReference type="eggNOG" id="KOG2078">
    <property type="taxonomic scope" value="Eukaryota"/>
</dbReference>
<dbReference type="HOGENOM" id="CLU_022610_2_3_1"/>
<dbReference type="InParanoid" id="B8BQY5"/>
<dbReference type="OMA" id="TARMETH"/>
<dbReference type="Proteomes" id="UP000001449">
    <property type="component" value="Chromosome 1"/>
</dbReference>
<dbReference type="GO" id="GO:0005737">
    <property type="term" value="C:cytoplasm"/>
    <property type="evidence" value="ECO:0000318"/>
    <property type="project" value="GO_Central"/>
</dbReference>
<dbReference type="GO" id="GO:0005759">
    <property type="term" value="C:mitochondrial matrix"/>
    <property type="evidence" value="ECO:0007669"/>
    <property type="project" value="UniProtKB-SubCell"/>
</dbReference>
<dbReference type="GO" id="GO:0005634">
    <property type="term" value="C:nucleus"/>
    <property type="evidence" value="ECO:0007669"/>
    <property type="project" value="UniProtKB-SubCell"/>
</dbReference>
<dbReference type="GO" id="GO:0052906">
    <property type="term" value="F:tRNA (guanine(37)-N1)-methyltransferase activity"/>
    <property type="evidence" value="ECO:0007669"/>
    <property type="project" value="UniProtKB-UniRule"/>
</dbReference>
<dbReference type="GO" id="GO:0008175">
    <property type="term" value="F:tRNA methyltransferase activity"/>
    <property type="evidence" value="ECO:0000318"/>
    <property type="project" value="GO_Central"/>
</dbReference>
<dbReference type="GO" id="GO:0002939">
    <property type="term" value="P:tRNA N1-guanine methylation"/>
    <property type="evidence" value="ECO:0000318"/>
    <property type="project" value="GO_Central"/>
</dbReference>
<dbReference type="FunFam" id="3.30.300.110:FF:000001">
    <property type="entry name" value="tRNA (guanine(37)-N1)-methyltransferase"/>
    <property type="match status" value="1"/>
</dbReference>
<dbReference type="FunFam" id="3.40.50.150:FF:000423">
    <property type="entry name" value="tRNA (guanine(37)-N1)-methyltransferase"/>
    <property type="match status" value="1"/>
</dbReference>
<dbReference type="Gene3D" id="3.30.300.110">
    <property type="entry name" value="Met-10+ protein-like domains"/>
    <property type="match status" value="1"/>
</dbReference>
<dbReference type="Gene3D" id="3.40.50.150">
    <property type="entry name" value="Vaccinia Virus protein VP39"/>
    <property type="match status" value="1"/>
</dbReference>
<dbReference type="HAMAP" id="MF_03152">
    <property type="entry name" value="TRM5"/>
    <property type="match status" value="1"/>
</dbReference>
<dbReference type="InterPro" id="IPR030382">
    <property type="entry name" value="MeTrfase_TRM5/TYW2"/>
</dbReference>
<dbReference type="InterPro" id="IPR029063">
    <property type="entry name" value="SAM-dependent_MTases_sf"/>
</dbReference>
<dbReference type="InterPro" id="IPR056743">
    <property type="entry name" value="TRM5-TYW2-like_MTfase"/>
</dbReference>
<dbReference type="InterPro" id="IPR056744">
    <property type="entry name" value="TRM5/TYW2-like_N"/>
</dbReference>
<dbReference type="InterPro" id="IPR025792">
    <property type="entry name" value="tRNA_Gua_MeTrfase_euk"/>
</dbReference>
<dbReference type="PANTHER" id="PTHR23245:SF36">
    <property type="entry name" value="TRNA (GUANINE(37)-N1)-METHYLTRANSFERASE"/>
    <property type="match status" value="1"/>
</dbReference>
<dbReference type="PANTHER" id="PTHR23245">
    <property type="entry name" value="TRNA METHYLTRANSFERASE"/>
    <property type="match status" value="1"/>
</dbReference>
<dbReference type="Pfam" id="PF02475">
    <property type="entry name" value="TRM5-TYW2_MTfase"/>
    <property type="match status" value="1"/>
</dbReference>
<dbReference type="Pfam" id="PF25133">
    <property type="entry name" value="TYW2_N_2"/>
    <property type="match status" value="1"/>
</dbReference>
<dbReference type="SUPFAM" id="SSF53335">
    <property type="entry name" value="S-adenosyl-L-methionine-dependent methyltransferases"/>
    <property type="match status" value="1"/>
</dbReference>
<dbReference type="PROSITE" id="PS51684">
    <property type="entry name" value="SAM_MT_TRM5_TYW2"/>
    <property type="match status" value="1"/>
</dbReference>
<reference key="1">
    <citation type="journal article" date="2004" name="Science">
        <title>The genome of the diatom Thalassiosira pseudonana: ecology, evolution, and metabolism.</title>
        <authorList>
            <person name="Armbrust E.V."/>
            <person name="Berges J.A."/>
            <person name="Bowler C."/>
            <person name="Green B.R."/>
            <person name="Martinez D."/>
            <person name="Putnam N.H."/>
            <person name="Zhou S."/>
            <person name="Allen A.E."/>
            <person name="Apt K.E."/>
            <person name="Bechner M."/>
            <person name="Brzezinski M.A."/>
            <person name="Chaal B.K."/>
            <person name="Chiovitti A."/>
            <person name="Davis A.K."/>
            <person name="Demarest M.S."/>
            <person name="Detter J.C."/>
            <person name="Glavina T."/>
            <person name="Goodstein D."/>
            <person name="Hadi M.Z."/>
            <person name="Hellsten U."/>
            <person name="Hildebrand M."/>
            <person name="Jenkins B.D."/>
            <person name="Jurka J."/>
            <person name="Kapitonov V.V."/>
            <person name="Kroger N."/>
            <person name="Lau W.W."/>
            <person name="Lane T.W."/>
            <person name="Larimer F.W."/>
            <person name="Lippmeier J.C."/>
            <person name="Lucas S."/>
            <person name="Medina M."/>
            <person name="Montsant A."/>
            <person name="Obornik M."/>
            <person name="Parker M.S."/>
            <person name="Palenik B."/>
            <person name="Pazour G.J."/>
            <person name="Richardson P.M."/>
            <person name="Rynearson T.A."/>
            <person name="Saito M.A."/>
            <person name="Schwartz D.C."/>
            <person name="Thamatrakoln K."/>
            <person name="Valentin K."/>
            <person name="Vardi A."/>
            <person name="Wilkerson F.P."/>
            <person name="Rokhsar D.S."/>
        </authorList>
    </citation>
    <scope>NUCLEOTIDE SEQUENCE [LARGE SCALE GENOMIC DNA]</scope>
    <source>
        <strain>CCMP1335 / NEPCC58 / CCAP 1085/12</strain>
    </source>
</reference>
<reference key="2">
    <citation type="submission" date="2008-09" db="EMBL/GenBank/DDBJ databases">
        <authorList>
            <consortium name="Diatom Consortium"/>
            <person name="Grigoriev I."/>
            <person name="Grimwood J."/>
            <person name="Kuo A."/>
            <person name="Otillar R.P."/>
            <person name="Salamov A."/>
            <person name="Detter J.C."/>
            <person name="Schmutz J."/>
            <person name="Lindquist E."/>
            <person name="Shapiro H."/>
            <person name="Lucas S."/>
            <person name="Glavina del Rio T."/>
            <person name="Bruce D."/>
            <person name="Pitluck S."/>
            <person name="Rokhsar D."/>
            <person name="Armbrust V."/>
        </authorList>
    </citation>
    <scope>GENOME REANNOTATION</scope>
    <source>
        <strain>CCMP1335 / NEPCC58 / CCAP 1085/12</strain>
    </source>
</reference>
<proteinExistence type="inferred from homology"/>
<comment type="function">
    <text evidence="1">Specifically methylates the N1 position of guanosine-37 in various cytoplasmic and mitochondrial tRNAs. Methylation is not dependent on the nature of the nucleoside 5' of the target nucleoside. This is the first step in the biosynthesis of wybutosine (yW), a modified base adjacent to the anticodon of tRNAs and required for accurate decoding.</text>
</comment>
<comment type="catalytic activity">
    <reaction evidence="1">
        <text>guanosine(37) in tRNA + S-adenosyl-L-methionine = N(1)-methylguanosine(37) in tRNA + S-adenosyl-L-homocysteine + H(+)</text>
        <dbReference type="Rhea" id="RHEA:36899"/>
        <dbReference type="Rhea" id="RHEA-COMP:10145"/>
        <dbReference type="Rhea" id="RHEA-COMP:10147"/>
        <dbReference type="ChEBI" id="CHEBI:15378"/>
        <dbReference type="ChEBI" id="CHEBI:57856"/>
        <dbReference type="ChEBI" id="CHEBI:59789"/>
        <dbReference type="ChEBI" id="CHEBI:73542"/>
        <dbReference type="ChEBI" id="CHEBI:74269"/>
        <dbReference type="EC" id="2.1.1.228"/>
    </reaction>
</comment>
<comment type="subunit">
    <text evidence="1">Monomer.</text>
</comment>
<comment type="subcellular location">
    <subcellularLocation>
        <location evidence="1">Mitochondrion matrix</location>
    </subcellularLocation>
    <subcellularLocation>
        <location evidence="1">Nucleus</location>
    </subcellularLocation>
    <subcellularLocation>
        <location evidence="1">Cytoplasm</location>
    </subcellularLocation>
    <text evidence="1">Predominantly in the mitochondria and in the nucleus.</text>
</comment>
<comment type="similarity">
    <text evidence="2">Belongs to the class I-like SAM-binding methyltransferase superfamily. TRM5/TYW2 family.</text>
</comment>
<protein>
    <recommendedName>
        <fullName evidence="1">tRNA (guanine(37)-N(1))-methyltransferase</fullName>
        <ecNumber evidence="1">2.1.1.228</ecNumber>
    </recommendedName>
    <alternativeName>
        <fullName evidence="1">M1G-methyltransferase</fullName>
    </alternativeName>
    <alternativeName>
        <fullName evidence="1">tRNA [GM37] methyltransferase</fullName>
    </alternativeName>
    <alternativeName>
        <fullName evidence="1">tRNA methyltransferase 5 homolog</fullName>
    </alternativeName>
</protein>
<accession>B8BQY5</accession>
<name>TRM5_THAPS</name>
<gene>
    <name type="ORF">THAPSDRAFT_268027</name>
</gene>
<keyword id="KW-0963">Cytoplasm</keyword>
<keyword id="KW-0489">Methyltransferase</keyword>
<keyword id="KW-0496">Mitochondrion</keyword>
<keyword id="KW-0539">Nucleus</keyword>
<keyword id="KW-1185">Reference proteome</keyword>
<keyword id="KW-0949">S-adenosyl-L-methionine</keyword>
<keyword id="KW-0808">Transferase</keyword>
<keyword id="KW-0819">tRNA processing</keyword>
<feature type="chain" id="PRO_0000414156" description="tRNA (guanine(37)-N(1))-methyltransferase">
    <location>
        <begin position="1"/>
        <end position="480"/>
    </location>
</feature>
<feature type="binding site" evidence="1">
    <location>
        <position position="244"/>
    </location>
    <ligand>
        <name>S-adenosyl-L-methionine</name>
        <dbReference type="ChEBI" id="CHEBI:59789"/>
    </ligand>
</feature>
<feature type="binding site" evidence="1">
    <location>
        <begin position="292"/>
        <end position="293"/>
    </location>
    <ligand>
        <name>S-adenosyl-L-methionine</name>
        <dbReference type="ChEBI" id="CHEBI:59789"/>
    </ligand>
</feature>
<feature type="binding site" evidence="1">
    <location>
        <begin position="321"/>
        <end position="322"/>
    </location>
    <ligand>
        <name>S-adenosyl-L-methionine</name>
        <dbReference type="ChEBI" id="CHEBI:59789"/>
    </ligand>
</feature>
<feature type="binding site" evidence="1">
    <location>
        <position position="342"/>
    </location>
    <ligand>
        <name>S-adenosyl-L-methionine</name>
        <dbReference type="ChEBI" id="CHEBI:59789"/>
    </ligand>
</feature>
<sequence length="480" mass="54077">MTHHLAPLDSLPTSIYPPSAYPPPSFFESSSLIYPALLIPAKRTGEVQKTLKDVIFTEPKRKSVYPLEEGVDYSSIEVSAEGGYDPMKERKVVLIRLGDIAGKNEEEQITGIKEDPVFQDARVKSMLLSAKINIGAEPSTAPNAATNVEEVPSSFEIAGHVAHVNLRSESLPYKYLIGKAILDKNPKLRVVVNKIGNIENEFRTFPMEILAGEGLDLDLLKEHGCRFKLDFAKVYWNSRLQGEHARLVQYITKPKECIVADAMAGVGPFAVPLTSALAPHYYKTTVVCHANDLNPISYKYLQTNAQLNRCFADRLITYNLDGREFIHKMNYERIEADHFIMNLPQMAPEFLDAFRGWKFDDTTGHRPIIHVHCFDEKTRNEEETARMETHVLQRCEAALGSSGCLVDKRQENDVQIRVVRDVGPRKNMLCVSFRLPVEVAGVEKLLLTKNSDAEVNGKRKRENYDCVAEVSNVSKKERDS</sequence>